<comment type="function">
    <text evidence="1">RNA chaperone that binds small regulatory RNA (sRNAs) and mRNAs to facilitate mRNA translational regulation in response to envelope stress, environmental stress and changes in metabolite concentrations. Also binds with high specificity to tRNAs.</text>
</comment>
<comment type="subunit">
    <text evidence="1">Homohexamer.</text>
</comment>
<comment type="similarity">
    <text evidence="1">Belongs to the Hfq family.</text>
</comment>
<gene>
    <name evidence="1" type="primary">hfq</name>
    <name type="ordered locus">ECIAI1_4405</name>
</gene>
<name>HFQ_ECO8A</name>
<accession>B7M8T2</accession>
<evidence type="ECO:0000255" key="1">
    <source>
        <dbReference type="HAMAP-Rule" id="MF_00436"/>
    </source>
</evidence>
<evidence type="ECO:0000255" key="2">
    <source>
        <dbReference type="PROSITE-ProRule" id="PRU01346"/>
    </source>
</evidence>
<evidence type="ECO:0000256" key="3">
    <source>
        <dbReference type="SAM" id="MobiDB-lite"/>
    </source>
</evidence>
<protein>
    <recommendedName>
        <fullName evidence="1">RNA-binding protein Hfq</fullName>
    </recommendedName>
</protein>
<keyword id="KW-0694">RNA-binding</keyword>
<keyword id="KW-0346">Stress response</keyword>
<proteinExistence type="inferred from homology"/>
<feature type="chain" id="PRO_1000190330" description="RNA-binding protein Hfq">
    <location>
        <begin position="1"/>
        <end position="102"/>
    </location>
</feature>
<feature type="domain" description="Sm" evidence="2">
    <location>
        <begin position="9"/>
        <end position="68"/>
    </location>
</feature>
<feature type="region of interest" description="Disordered" evidence="3">
    <location>
        <begin position="63"/>
        <end position="102"/>
    </location>
</feature>
<feature type="compositionally biased region" description="Polar residues" evidence="3">
    <location>
        <begin position="70"/>
        <end position="96"/>
    </location>
</feature>
<sequence>MAKGQSLQDPFLNALRRERVPVSIYLVNGIKLQGQIESFDQFVILLKNTVSQMVYKHAISTVVPSRPVSHHSNNAGGGTSSNYHHGSSAQNTSAQQDSEETE</sequence>
<organism>
    <name type="scientific">Escherichia coli O8 (strain IAI1)</name>
    <dbReference type="NCBI Taxonomy" id="585034"/>
    <lineage>
        <taxon>Bacteria</taxon>
        <taxon>Pseudomonadati</taxon>
        <taxon>Pseudomonadota</taxon>
        <taxon>Gammaproteobacteria</taxon>
        <taxon>Enterobacterales</taxon>
        <taxon>Enterobacteriaceae</taxon>
        <taxon>Escherichia</taxon>
    </lineage>
</organism>
<dbReference type="EMBL" id="CU928160">
    <property type="protein sequence ID" value="CAR01147.1"/>
    <property type="molecule type" value="Genomic_DNA"/>
</dbReference>
<dbReference type="RefSeq" id="WP_001051883.1">
    <property type="nucleotide sequence ID" value="NC_011741.1"/>
</dbReference>
<dbReference type="SMR" id="B7M8T2"/>
<dbReference type="GeneID" id="93777649"/>
<dbReference type="KEGG" id="ecr:ECIAI1_4405"/>
<dbReference type="HOGENOM" id="CLU_113688_2_1_6"/>
<dbReference type="GO" id="GO:0005829">
    <property type="term" value="C:cytosol"/>
    <property type="evidence" value="ECO:0007669"/>
    <property type="project" value="TreeGrafter"/>
</dbReference>
<dbReference type="GO" id="GO:0003723">
    <property type="term" value="F:RNA binding"/>
    <property type="evidence" value="ECO:0007669"/>
    <property type="project" value="UniProtKB-UniRule"/>
</dbReference>
<dbReference type="GO" id="GO:0006355">
    <property type="term" value="P:regulation of DNA-templated transcription"/>
    <property type="evidence" value="ECO:0007669"/>
    <property type="project" value="InterPro"/>
</dbReference>
<dbReference type="GO" id="GO:0043487">
    <property type="term" value="P:regulation of RNA stability"/>
    <property type="evidence" value="ECO:0007669"/>
    <property type="project" value="TreeGrafter"/>
</dbReference>
<dbReference type="GO" id="GO:0045974">
    <property type="term" value="P:regulation of translation, ncRNA-mediated"/>
    <property type="evidence" value="ECO:0007669"/>
    <property type="project" value="TreeGrafter"/>
</dbReference>
<dbReference type="CDD" id="cd01716">
    <property type="entry name" value="Hfq"/>
    <property type="match status" value="1"/>
</dbReference>
<dbReference type="FunFam" id="2.30.30.100:FF:000001">
    <property type="entry name" value="RNA-binding protein Hfq"/>
    <property type="match status" value="1"/>
</dbReference>
<dbReference type="Gene3D" id="2.30.30.100">
    <property type="match status" value="1"/>
</dbReference>
<dbReference type="HAMAP" id="MF_00436">
    <property type="entry name" value="Hfq"/>
    <property type="match status" value="1"/>
</dbReference>
<dbReference type="InterPro" id="IPR005001">
    <property type="entry name" value="Hfq"/>
</dbReference>
<dbReference type="InterPro" id="IPR010920">
    <property type="entry name" value="LSM_dom_sf"/>
</dbReference>
<dbReference type="InterPro" id="IPR047575">
    <property type="entry name" value="Sm"/>
</dbReference>
<dbReference type="NCBIfam" id="TIGR02383">
    <property type="entry name" value="Hfq"/>
    <property type="match status" value="1"/>
</dbReference>
<dbReference type="NCBIfam" id="NF001602">
    <property type="entry name" value="PRK00395.1"/>
    <property type="match status" value="1"/>
</dbReference>
<dbReference type="PANTHER" id="PTHR34772">
    <property type="entry name" value="RNA-BINDING PROTEIN HFQ"/>
    <property type="match status" value="1"/>
</dbReference>
<dbReference type="PANTHER" id="PTHR34772:SF1">
    <property type="entry name" value="RNA-BINDING PROTEIN HFQ"/>
    <property type="match status" value="1"/>
</dbReference>
<dbReference type="Pfam" id="PF17209">
    <property type="entry name" value="Hfq"/>
    <property type="match status" value="1"/>
</dbReference>
<dbReference type="SUPFAM" id="SSF50182">
    <property type="entry name" value="Sm-like ribonucleoproteins"/>
    <property type="match status" value="1"/>
</dbReference>
<dbReference type="PROSITE" id="PS52002">
    <property type="entry name" value="SM"/>
    <property type="match status" value="1"/>
</dbReference>
<reference key="1">
    <citation type="journal article" date="2009" name="PLoS Genet.">
        <title>Organised genome dynamics in the Escherichia coli species results in highly diverse adaptive paths.</title>
        <authorList>
            <person name="Touchon M."/>
            <person name="Hoede C."/>
            <person name="Tenaillon O."/>
            <person name="Barbe V."/>
            <person name="Baeriswyl S."/>
            <person name="Bidet P."/>
            <person name="Bingen E."/>
            <person name="Bonacorsi S."/>
            <person name="Bouchier C."/>
            <person name="Bouvet O."/>
            <person name="Calteau A."/>
            <person name="Chiapello H."/>
            <person name="Clermont O."/>
            <person name="Cruveiller S."/>
            <person name="Danchin A."/>
            <person name="Diard M."/>
            <person name="Dossat C."/>
            <person name="Karoui M.E."/>
            <person name="Frapy E."/>
            <person name="Garry L."/>
            <person name="Ghigo J.M."/>
            <person name="Gilles A.M."/>
            <person name="Johnson J."/>
            <person name="Le Bouguenec C."/>
            <person name="Lescat M."/>
            <person name="Mangenot S."/>
            <person name="Martinez-Jehanne V."/>
            <person name="Matic I."/>
            <person name="Nassif X."/>
            <person name="Oztas S."/>
            <person name="Petit M.A."/>
            <person name="Pichon C."/>
            <person name="Rouy Z."/>
            <person name="Ruf C.S."/>
            <person name="Schneider D."/>
            <person name="Tourret J."/>
            <person name="Vacherie B."/>
            <person name="Vallenet D."/>
            <person name="Medigue C."/>
            <person name="Rocha E.P.C."/>
            <person name="Denamur E."/>
        </authorList>
    </citation>
    <scope>NUCLEOTIDE SEQUENCE [LARGE SCALE GENOMIC DNA]</scope>
    <source>
        <strain>IAI1</strain>
    </source>
</reference>